<organism>
    <name type="scientific">Cryptococcus neoformans var. neoformans serotype D (strain B-3501A)</name>
    <name type="common">Filobasidiella neoformans</name>
    <dbReference type="NCBI Taxonomy" id="283643"/>
    <lineage>
        <taxon>Eukaryota</taxon>
        <taxon>Fungi</taxon>
        <taxon>Dikarya</taxon>
        <taxon>Basidiomycota</taxon>
        <taxon>Agaricomycotina</taxon>
        <taxon>Tremellomycetes</taxon>
        <taxon>Tremellales</taxon>
        <taxon>Cryptococcaceae</taxon>
        <taxon>Cryptococcus</taxon>
        <taxon>Cryptococcus neoformans species complex</taxon>
    </lineage>
</organism>
<accession>P0CM63</accession>
<accession>Q55QF1</accession>
<accession>Q5KFS0</accession>
<reference key="1">
    <citation type="journal article" date="2005" name="Science">
        <title>The genome of the basidiomycetous yeast and human pathogen Cryptococcus neoformans.</title>
        <authorList>
            <person name="Loftus B.J."/>
            <person name="Fung E."/>
            <person name="Roncaglia P."/>
            <person name="Rowley D."/>
            <person name="Amedeo P."/>
            <person name="Bruno D."/>
            <person name="Vamathevan J."/>
            <person name="Miranda M."/>
            <person name="Anderson I.J."/>
            <person name="Fraser J.A."/>
            <person name="Allen J.E."/>
            <person name="Bosdet I.E."/>
            <person name="Brent M.R."/>
            <person name="Chiu R."/>
            <person name="Doering T.L."/>
            <person name="Donlin M.J."/>
            <person name="D'Souza C.A."/>
            <person name="Fox D.S."/>
            <person name="Grinberg V."/>
            <person name="Fu J."/>
            <person name="Fukushima M."/>
            <person name="Haas B.J."/>
            <person name="Huang J.C."/>
            <person name="Janbon G."/>
            <person name="Jones S.J.M."/>
            <person name="Koo H.L."/>
            <person name="Krzywinski M.I."/>
            <person name="Kwon-Chung K.J."/>
            <person name="Lengeler K.B."/>
            <person name="Maiti R."/>
            <person name="Marra M.A."/>
            <person name="Marra R.E."/>
            <person name="Mathewson C.A."/>
            <person name="Mitchell T.G."/>
            <person name="Pertea M."/>
            <person name="Riggs F.R."/>
            <person name="Salzberg S.L."/>
            <person name="Schein J.E."/>
            <person name="Shvartsbeyn A."/>
            <person name="Shin H."/>
            <person name="Shumway M."/>
            <person name="Specht C.A."/>
            <person name="Suh B.B."/>
            <person name="Tenney A."/>
            <person name="Utterback T.R."/>
            <person name="Wickes B.L."/>
            <person name="Wortman J.R."/>
            <person name="Wye N.H."/>
            <person name="Kronstad J.W."/>
            <person name="Lodge J.K."/>
            <person name="Heitman J."/>
            <person name="Davis R.W."/>
            <person name="Fraser C.M."/>
            <person name="Hyman R.W."/>
        </authorList>
    </citation>
    <scope>NUCLEOTIDE SEQUENCE [LARGE SCALE GENOMIC DNA]</scope>
    <source>
        <strain>B-3501A</strain>
    </source>
</reference>
<proteinExistence type="inferred from homology"/>
<comment type="function">
    <text evidence="1">RNA-binding component of the cleavage and polyadenylation factor (CPF) complex, which plays a key role in polyadenylation-dependent pre-mRNA 3'-end formation and cooperates with cleavage factors including the CFIA complex and NAB4/CFIB. Involved in poly(A) site recognition. May be involved in coupling transcription termination and mRNA 3'-end formation (By similarity).</text>
</comment>
<comment type="subcellular location">
    <subcellularLocation>
        <location evidence="1">Nucleus</location>
    </subcellularLocation>
</comment>
<comment type="similarity">
    <text evidence="3">Belongs to the CFT1 family.</text>
</comment>
<feature type="chain" id="PRO_0000410034" description="Protein CFT1">
    <location>
        <begin position="1"/>
        <end position="1431"/>
    </location>
</feature>
<feature type="region of interest" description="Disordered" evidence="2">
    <location>
        <begin position="721"/>
        <end position="759"/>
    </location>
</feature>
<feature type="compositionally biased region" description="Polar residues" evidence="2">
    <location>
        <begin position="740"/>
        <end position="759"/>
    </location>
</feature>
<gene>
    <name type="primary">CFT1</name>
    <name type="ordered locus">CNBF3860</name>
</gene>
<sequence length="1431" mass="156934">MHALHQTLLPSSSIHHSLFLPHFTPSTIYPLPKPPAALDTLDVKVIGNLVVAGAEVLRVFEIREESVPIIENVKLEEDVAEGEKDVQMEEVGDGFFDDGHAERAPLKYQTTRRLHLLTQHELNGTITGLAATRTLESTIDGLDRLIVSFKDAKMALLEWSRGDIATVSLHTYERCSQMNTGDLQSYVPLLRTDPLSRLAVLTLPEDSLAVLPLIQEQSELDPLSEGFSRDAPYSPSFVLSLSDMSITIKNIQDLLFLPGFHSPTIALLFSPMHTWSGRLQTVKDTFCLEIRTFDLSSGTSYPLLTSVSGLPSDSLYLVACPSELGGIVLVTSTGIVHVDQGGRVTAACVNAWWSRITSLKCSMASVSQKLTLEGSRCVFVTPHDMLLVLQNGAVHQVRFSMEGRAVGVIEVLDKGCVVPPPSDLTVAGDGAVFVGSAEGDSWLAKVNVVRQVVERSEKKKDEMEVDWDEDLYGDINDAALDEKAQELFGPAAITLSPYDILTGVGKIMDIEFGIAASDQGLRTYPQLVAVSGGSRNSTINVFRRGIPITKRRRFNELLNAEGVWFLPIDRQTGQKFKDIPEAERATILLSSEGNATRVFALFSKPTPQQIGRLDGKTLSAAPFFQRSCILRVSPLEVVLLDNNGKIIQTVCPRGDGPKIVNASISDPFVIIRRADDSVTFFVGDTVARTVAEAPIVSEGESPVCQAVEVFTDTTGVYRTFEPSKSESSEPISHQIDSENKPNITNGINGTTARSARQTQLTPQQIKRLQEQEPAITTEAPSMETAINSPHGTQWLALVTRGGELQIRSLPDLQIVLQSEGLASSAPSFTDDLGENPGYVLGEKREEGEEEDEIIQMVFCPIGKGTVRQHLLALHHSGRLNAYEAQPRFTVDASSHSRRSLAVRFRKVHTQLLPISGGVGTTNGNARLPYTIVPFNNIEGLTGAFITGEKPHWIISSEAHPLRAFALKQAAMAFGKTTHLGGKGEYFIRIEDGSFICYLPPTLNTDFAIPCDRYQMERAYTNITFDPTSAHYVGAASIEVPFQAYDEEGEIQLGPDGPDLIPPTNQRSTLELFSQGSDPWKVIDGYEFDQNEEVMSMESVNLESPGAPGGYRDFIAVGTGFNFGEDRATRGNTYIFEILQTVGPQGGGGPGSVPGWKLVKRTKDPARHPVNAVNHINGYLLNTNGPKLYVKGLDYDSQLMGLAFLDIQLYATTVKVFKNFMLIGDLCKSFWFVSLQEDPYKFTTISKDLQHVSVVTADFLVHDGQVTFISSDRNGDMRMLDFDPTDPDSLNGERLMLRTEYHAGSAATVSKVIARRKTAEEEFAPQTQIIYATADGALTTVVSVKDARFKRLQLVSDQLVRNAQHVAGLNPRAFRTVRNDLLPRPLSKGILDGQLLNQFALQPIGRQKEMMRQIGTDAVTVASDLQALGGFW</sequence>
<protein>
    <recommendedName>
        <fullName>Protein CFT1</fullName>
    </recommendedName>
    <alternativeName>
        <fullName>Cleavage factor two protein 1</fullName>
    </alternativeName>
</protein>
<keyword id="KW-0507">mRNA processing</keyword>
<keyword id="KW-0539">Nucleus</keyword>
<keyword id="KW-0694">RNA-binding</keyword>
<name>CFT1_CRYNB</name>
<dbReference type="EMBL" id="AAEY01000032">
    <property type="protein sequence ID" value="EAL20060.1"/>
    <property type="molecule type" value="Genomic_DNA"/>
</dbReference>
<dbReference type="RefSeq" id="XP_774707.1">
    <property type="nucleotide sequence ID" value="XM_769614.1"/>
</dbReference>
<dbReference type="SMR" id="P0CM63"/>
<dbReference type="EnsemblFungi" id="AAW44183">
    <property type="protein sequence ID" value="AAW44183"/>
    <property type="gene ID" value="CNF00780"/>
</dbReference>
<dbReference type="GeneID" id="4936938"/>
<dbReference type="KEGG" id="cnb:CNBF3860"/>
<dbReference type="VEuPathDB" id="FungiDB:CNBF3860"/>
<dbReference type="HOGENOM" id="CLU_002414_0_0_1"/>
<dbReference type="OrthoDB" id="2515at5206"/>
<dbReference type="GO" id="GO:0005634">
    <property type="term" value="C:nucleus"/>
    <property type="evidence" value="ECO:0007669"/>
    <property type="project" value="UniProtKB-SubCell"/>
</dbReference>
<dbReference type="GO" id="GO:0003723">
    <property type="term" value="F:RNA binding"/>
    <property type="evidence" value="ECO:0007669"/>
    <property type="project" value="UniProtKB-KW"/>
</dbReference>
<dbReference type="GO" id="GO:0006397">
    <property type="term" value="P:mRNA processing"/>
    <property type="evidence" value="ECO:0007669"/>
    <property type="project" value="UniProtKB-KW"/>
</dbReference>
<dbReference type="FunFam" id="2.130.10.10:FF:000730">
    <property type="entry name" value="Chromosome 15, whole genome shotgun sequence"/>
    <property type="match status" value="1"/>
</dbReference>
<dbReference type="Gene3D" id="2.130.10.10">
    <property type="entry name" value="YVTN repeat-like/Quinoprotein amine dehydrogenase"/>
    <property type="match status" value="3"/>
</dbReference>
<dbReference type="InterPro" id="IPR018846">
    <property type="entry name" value="Beta-prop_RSE1/DDB1/CPSF1_1st"/>
</dbReference>
<dbReference type="InterPro" id="IPR004871">
    <property type="entry name" value="Cleavage/polyA-sp_fac_asu_C"/>
</dbReference>
<dbReference type="InterPro" id="IPR050358">
    <property type="entry name" value="RSE1/DDB1/CFT1/CPSF1"/>
</dbReference>
<dbReference type="InterPro" id="IPR015943">
    <property type="entry name" value="WD40/YVTN_repeat-like_dom_sf"/>
</dbReference>
<dbReference type="PANTHER" id="PTHR10644">
    <property type="entry name" value="DNA REPAIR/RNA PROCESSING CPSF FAMILY"/>
    <property type="match status" value="1"/>
</dbReference>
<dbReference type="Pfam" id="PF10433">
    <property type="entry name" value="Beta-prop_RSE1_1st"/>
    <property type="match status" value="1"/>
</dbReference>
<dbReference type="Pfam" id="PF03178">
    <property type="entry name" value="CPSF_A"/>
    <property type="match status" value="1"/>
</dbReference>
<evidence type="ECO:0000250" key="1"/>
<evidence type="ECO:0000256" key="2">
    <source>
        <dbReference type="SAM" id="MobiDB-lite"/>
    </source>
</evidence>
<evidence type="ECO:0000305" key="3"/>